<evidence type="ECO:0000250" key="1"/>
<evidence type="ECO:0000250" key="2">
    <source>
        <dbReference type="UniProtKB" id="Q62504"/>
    </source>
</evidence>
<evidence type="ECO:0000255" key="3"/>
<evidence type="ECO:0000255" key="4">
    <source>
        <dbReference type="PROSITE-ProRule" id="PRU00176"/>
    </source>
</evidence>
<evidence type="ECO:0000255" key="5">
    <source>
        <dbReference type="PROSITE-ProRule" id="PRU00249"/>
    </source>
</evidence>
<evidence type="ECO:0000256" key="6">
    <source>
        <dbReference type="SAM" id="MobiDB-lite"/>
    </source>
</evidence>
<evidence type="ECO:0000269" key="7">
    <source>
    </source>
</evidence>
<evidence type="ECO:0000269" key="8">
    <source>
    </source>
</evidence>
<evidence type="ECO:0000269" key="9">
    <source>
    </source>
</evidence>
<evidence type="ECO:0000269" key="10">
    <source>
    </source>
</evidence>
<evidence type="ECO:0000269" key="11">
    <source>
    </source>
</evidence>
<evidence type="ECO:0000269" key="12">
    <source>
    </source>
</evidence>
<evidence type="ECO:0000269" key="13">
    <source>
    </source>
</evidence>
<evidence type="ECO:0000305" key="14"/>
<evidence type="ECO:0007744" key="15">
    <source>
    </source>
</evidence>
<evidence type="ECO:0007744" key="16">
    <source>
    </source>
</evidence>
<evidence type="ECO:0007744" key="17">
    <source>
    </source>
</evidence>
<evidence type="ECO:0007744" key="18">
    <source>
    </source>
</evidence>
<evidence type="ECO:0007744" key="19">
    <source>
    </source>
</evidence>
<evidence type="ECO:0007744" key="20">
    <source>
    </source>
</evidence>
<evidence type="ECO:0007744" key="21">
    <source>
    </source>
</evidence>
<evidence type="ECO:0007744" key="22">
    <source>
    </source>
</evidence>
<evidence type="ECO:0007829" key="23">
    <source>
        <dbReference type="PDB" id="1OW1"/>
    </source>
</evidence>
<evidence type="ECO:0007829" key="24">
    <source>
        <dbReference type="PDB" id="2RT5"/>
    </source>
</evidence>
<evidence type="ECO:0007829" key="25">
    <source>
        <dbReference type="PDB" id="4P6Q"/>
    </source>
</evidence>
<evidence type="ECO:0007829" key="26">
    <source>
        <dbReference type="PDB" id="7Z1K"/>
    </source>
</evidence>
<sequence>MVRETRHLWVGNLPENVREEKIIEHFKRYGRVESVKILPKRGSEGGVAAFVDFVDIKSAQKAHNSVNKMGDRDLRTDYNEPGTIPSAARGLDDTVSIASRSREVSGFRGGGGGPAYGPPPSLHAREGRYERRLDGASDNRERAYEHSAYGHHERGTGGFDRTRHYDQDYYRDPRERTLQHGLYYASRSRSPNRFDAHDPRYEPRAREQFTLPSVVHRDIYRDDITREVRGRRPERNYQHSRSRSPHSSQSRNQSPQRLASQASRPTRSPSGSGSRSRSSSSDSISSSSSTSSDSSDSSSSSSDDSPARSVQSAAVPAPTSQLLSSLEKDEPRKSFGIKVQNLPVRSTDTSLKDGLFHEFKKFGKVTSVQIHGTSEERYGLVFFRQQEDQEKALTASKGKLFFGMQIEVTAWIGPETESENEFRPLDERIDEFHPKATRTLFIGNLEKTTTYHDLRNIFQRFGEIVDIDIKKVNGVPQYAFLQYCDIASVCKAIKKMDGEYLGNNRLKLGFGKSMPTNCVWLDGLSSNVSDQYLTRHFCRYGPVVKVVFDRLKGMALVLYNEIEYAQAAVKETKGRKIGGNKIKVDFANRESQLAFYHCMEKSGQDIRDFYEMLAERREERRASYDYNQDRTYYESVRTPGTYPEDSRRDYPARGREFYSEWETYQGDYYESRYYDDPREYRDYRNDPYEQDIREYSYRQRERERERERFESDRDRDHERRPIERSQSPVHLRRPQSPGASPSQAERLPSDSERRLYSRSSDRSGSCSSLSPPRYEKLDKSRLERYTKNEKTDKERTFDPERVERERRLIRKEKVEKDKTDKQKRKGKVHSPSSQSSETDQENEREQSPEKPRSCNKLSREKADKEGIAKNRLELMPCVVLTRVKEKEGKVIDHTPVEKLKAKLDNDTVKSSALDQKLQVSQTEPAKSDLSKLESVRMKVPKEKGLSSHVEVVEKEGRLKARKHLKPEQPADGVSAVDLEKLEARKRRFADSNLKAEKQKPEVKKSSPEMEDARVLSKKQPDVSSREVILLREGEAERKPVRKEILKRESKKIKLDRLNTVASPKDCQELASISVGSGSRPSSDLQARLGELAGESVENQEVQSKKPIPSKPQLKQLQVLDDQGPEREDVRKNYCSLRDETPERKSGQEKSHSVNTEEKIGIDIDHTQSYRKQMEQSRRKQQMEMEIAKSEKFGSPKKDVDEYERRSLVHEVGKPPQDVTDDSPPSKKKRMDHVDFDICTKRERNYRSSRQISEDSERTGGSPSVRHGSFHEDEDPIGSPRLLSVKGSPKVDEKVLPYSNITVREESLKFNPYDSSRREQMADMAKIKLSVLNSEDELNRWDSQMKQDAGRFDVSFPNSIIKRDSLRKRSVRDLEPGEVPSDSDEDGEHKSHSPRASALYESSRLSFLLRDREDKLRERDERLSSSLERNKFYSFALDKTITPDTKALLERAKSLSSSREENWSFLDWDSRFANFRNNKDKEKVDSAPRPIPSWYMKKKKIRTDSEGKMDDKKEDHKEEEQERQELFASRFLHSSIFEQDSKRLQHLERKEEDSDFISGRIYGKQTSEGANSTTDSIQEPVVLFHSRFMELTRMQQKEKEKDQKPKEVEKQEDTENHPKTPESAPENKDSELKTPPSVGPPSVTVVTLESAPSALEKTTGDKTVEAPLVTEEKTVEPATVSEEAKPASEPAPAPVEQLEQVDLPPGADPDKEAAMMPAGVEEGSSGDQPPYLDAKPPTPGASFSQAESNVDPEPDSTQPLSKPAQKSEEANEPKAEKPDATADAEPDANQKAEAAPESQPPASEDLEVDPPVAAKDKKPNKSKRSKTPVQAAAVSIVEKPVTRKSERIDREKLKRSNSPRGEAQKLLELKMEAEKITRTASKNSAADLEHPEPSLPLSRTRRRNVRSVYATMGDHENRSPVKEPVEQPRVTRKRLERELQEAAAVPTTPRRGRPPKTRRRADEEEENEAKEPAETLKPPEGWRSPRSQKTAAGGGPQGKKGKNEPKVDATRPEATTEVGPQIGVKESSMEPKAAEEEAGSEQKRDRKDAGTDKNPPETAPVEVVEKKPAPEKNSKSKRGRSRNSRLAVDKSASLKNVDAAVSPRGAAAQAGERESGVVAVSPEKSESPQKEDGLSSQLKSDPVDPDKEPEKEDVSASGPSPEATQLAKQMELEQAVEHIAKLAEASASAAYKADAPEGLAPEDRDKPAHQASETELAAAIGSIINDISGEPENFPAPPPYPGESQTDLQPPAGAQALQPSEEGMETDEAVSGILETEAATESSRPPVNAPDPSAGPTDTKEARGNSSETSHSVPEAKGSKEVEVTLVRKDKGRQKTTRSRRKRNTNKKVVAPVESHVPESNQAQGESPAANEGTTVQHPEAPQEEKQSEKPHSTPPQSCTSDLSKIPSTENSSQEISVEERTPTKASVPPDLPPPPQPAPVDEEPQARFRVHSIIESDPVTPPSDPSIPIPTLPSVTAAKLSPPVASGGIPHQSPPTKVTEWITRQEEPRAQSTPSPALPPDTKASDVDTSSSTLRKILMDPKYVSATSVTSTSVTTAIAEPVSAAPCLHEAPPPPVDSKKPLEEKTAPPVTNNSEIQASEVLVAADKEKVAPVIAPKITSVISRMPVSIDLENSQKITLAKPAPQTLTGLVSALTGLVNVSLVPVNALKGPVKGSVTTLKSLVSTPAGPVNVLKGPVNVLTGPVNVLTTPVNATVGTVNAAPGTVNAAASAVNATASAVTVTAGAVTAASGGVTATTGTVTMAGAVIAPSTKCKQRASANENSRFHPGSMPVIDDRPADAGSGAGLRVNTSEGVVLLSYSGQKTEGPQRISAKISQIPPASAMDIEFQQSVSKSQVKPDSVTASQPPSKGPQAPAGYANVATHSTLVLTAQTYNASPVISSVKADRPSLEKPEPIHLSVSTPVTQGGTVKVLTQGINTPPVLVHNQLVLTPSIVTTNKKLADPVTLKIETKVLQPANLGSTLTPHHPPALPSKLPTEVNHVPSGPSIPADRTVSHLAAAKLDAHSPRPSGPGPSSFPRASHPSSTASTALSTNATVMLAAGIPVPQFISSIHPEQSVIMPPHSITQTVSLSHLSQGEVRMNTPTLPSITYSIRPEALHSPRAPLQPQQIEVRAPQRASTPQPAPAGVPALASQHPPEEEVHYHLPVARATAPVQSEVLVMQSEYRLHPYTVPRDVRIMVHPHVTAVSEQPRAADGVVKVPPASKAPQQPGKEAAKTPDAKAAPTPTPAPVPVPVPLPAPAPAPHGEARILTVTPSNQLQGLPLTPPVVVTHGVQIVHSSGELFQEYRYGDIRTYHPPAQLTHTQFPAASSVGLPSRTKTAAQGPPPEGEPLQPPQPVQSTQPAQPAPPCPPSQLGQPGQPPSSKMPQVSQEAKGTQTGVEQPRLPAGPANRPPEPHTQVQRAQAETGPTSFPSPVSVSMKPDLPVSLPTQTAPKQPLFVPTTSGPSTPPGLVLPHTEFQPAPKQDSSPHLTSQRPVDMVQLLKKYPIVWQGLLALKNDTAAVQLHFVSGNNVLAHRSLPLSEGGPPLRIAQRMRLEATQLEGVARRMTVETDYCLLLALPCGRDQEDVVSQTESLKAAFITYLQAKQAAGIINVPNPGSNQPAYVLQIFPPCEFSESHLSRLAPDLLASISNISPHLMIVIASV</sequence>
<organism>
    <name type="scientific">Homo sapiens</name>
    <name type="common">Human</name>
    <dbReference type="NCBI Taxonomy" id="9606"/>
    <lineage>
        <taxon>Eukaryota</taxon>
        <taxon>Metazoa</taxon>
        <taxon>Chordata</taxon>
        <taxon>Craniata</taxon>
        <taxon>Vertebrata</taxon>
        <taxon>Euteleostomi</taxon>
        <taxon>Mammalia</taxon>
        <taxon>Eutheria</taxon>
        <taxon>Euarchontoglires</taxon>
        <taxon>Primates</taxon>
        <taxon>Haplorrhini</taxon>
        <taxon>Catarrhini</taxon>
        <taxon>Hominidae</taxon>
        <taxon>Homo</taxon>
    </lineage>
</organism>
<name>MINT_HUMAN</name>
<protein>
    <recommendedName>
        <fullName>Msx2-interacting protein</fullName>
    </recommendedName>
    <alternativeName>
        <fullName>SMART/HDAC1-associated repressor protein</fullName>
    </alternativeName>
    <alternativeName>
        <fullName>SPEN homolog</fullName>
    </alternativeName>
</protein>
<gene>
    <name type="primary">SPEN</name>
    <name type="synonym">KIAA0929</name>
    <name type="synonym">MINT</name>
    <name type="synonym">SHARP</name>
</gene>
<dbReference type="EMBL" id="AF356524">
    <property type="protein sequence ID" value="AAK52750.1"/>
    <property type="molecule type" value="mRNA"/>
</dbReference>
<dbReference type="EMBL" id="AL034555">
    <property type="status" value="NOT_ANNOTATED_CDS"/>
    <property type="molecule type" value="Genomic_DNA"/>
</dbReference>
<dbReference type="EMBL" id="AL450998">
    <property type="status" value="NOT_ANNOTATED_CDS"/>
    <property type="molecule type" value="Genomic_DNA"/>
</dbReference>
<dbReference type="EMBL" id="AL096858">
    <property type="protein sequence ID" value="CAB51072.1"/>
    <property type="status" value="ALT_INIT"/>
    <property type="molecule type" value="mRNA"/>
</dbReference>
<dbReference type="EMBL" id="AK000882">
    <property type="protein sequence ID" value="BAA91405.1"/>
    <property type="status" value="ALT_INIT"/>
    <property type="molecule type" value="mRNA"/>
</dbReference>
<dbReference type="EMBL" id="AK022949">
    <property type="protein sequence ID" value="BAB14324.1"/>
    <property type="status" value="ALT_INIT"/>
    <property type="molecule type" value="mRNA"/>
</dbReference>
<dbReference type="EMBL" id="AB023146">
    <property type="protein sequence ID" value="BAA76773.1"/>
    <property type="molecule type" value="mRNA"/>
</dbReference>
<dbReference type="CCDS" id="CCDS164.1"/>
<dbReference type="RefSeq" id="NP_055816.2">
    <property type="nucleotide sequence ID" value="NM_015001.2"/>
</dbReference>
<dbReference type="PDB" id="1OW1">
    <property type="method" value="X-ray"/>
    <property type="resolution" value="1.80 A"/>
    <property type="chains" value="A=3470-3664"/>
</dbReference>
<dbReference type="PDB" id="2RT5">
    <property type="method" value="NMR"/>
    <property type="chains" value="A=3496-3664"/>
</dbReference>
<dbReference type="PDB" id="4P6Q">
    <property type="method" value="X-ray"/>
    <property type="resolution" value="2.00 A"/>
    <property type="chains" value="A=335-620"/>
</dbReference>
<dbReference type="PDB" id="7Z1K">
    <property type="method" value="X-ray"/>
    <property type="resolution" value="1.55 A"/>
    <property type="chains" value="A=3496-3664"/>
</dbReference>
<dbReference type="PDBsum" id="1OW1"/>
<dbReference type="PDBsum" id="2RT5"/>
<dbReference type="PDBsum" id="4P6Q"/>
<dbReference type="PDBsum" id="7Z1K"/>
<dbReference type="BMRB" id="Q96T58"/>
<dbReference type="SMR" id="Q96T58"/>
<dbReference type="BioGRID" id="116655">
    <property type="interactions" value="145"/>
</dbReference>
<dbReference type="CORUM" id="Q96T58"/>
<dbReference type="DIP" id="DIP-34569N"/>
<dbReference type="FunCoup" id="Q96T58">
    <property type="interactions" value="1865"/>
</dbReference>
<dbReference type="IntAct" id="Q96T58">
    <property type="interactions" value="96"/>
</dbReference>
<dbReference type="MINT" id="Q96T58"/>
<dbReference type="STRING" id="9606.ENSP00000364912"/>
<dbReference type="GlyConnect" id="2907">
    <property type="glycosylation" value="1 O-GlcNAc glycan (4 sites)"/>
</dbReference>
<dbReference type="GlyCosmos" id="Q96T58">
    <property type="glycosylation" value="42 sites, 2 glycans"/>
</dbReference>
<dbReference type="GlyGen" id="Q96T58">
    <property type="glycosylation" value="77 sites, 2 O-linked glycans (72 sites)"/>
</dbReference>
<dbReference type="iPTMnet" id="Q96T58"/>
<dbReference type="PhosphoSitePlus" id="Q96T58"/>
<dbReference type="SwissPalm" id="Q96T58"/>
<dbReference type="BioMuta" id="SPEN"/>
<dbReference type="DMDM" id="41688816"/>
<dbReference type="jPOST" id="Q96T58"/>
<dbReference type="MassIVE" id="Q96T58"/>
<dbReference type="PaxDb" id="9606-ENSP00000364912"/>
<dbReference type="PeptideAtlas" id="Q96T58"/>
<dbReference type="ProteomicsDB" id="78197"/>
<dbReference type="Pumba" id="Q96T58"/>
<dbReference type="Antibodypedia" id="14431">
    <property type="antibodies" value="54 antibodies from 18 providers"/>
</dbReference>
<dbReference type="DNASU" id="23013"/>
<dbReference type="Ensembl" id="ENST00000375759.8">
    <property type="protein sequence ID" value="ENSP00000364912.3"/>
    <property type="gene ID" value="ENSG00000065526.13"/>
</dbReference>
<dbReference type="GeneID" id="23013"/>
<dbReference type="KEGG" id="hsa:23013"/>
<dbReference type="MANE-Select" id="ENST00000375759.8">
    <property type="protein sequence ID" value="ENSP00000364912.3"/>
    <property type="RefSeq nucleotide sequence ID" value="NM_015001.3"/>
    <property type="RefSeq protein sequence ID" value="NP_055816.2"/>
</dbReference>
<dbReference type="UCSC" id="uc001axk.2">
    <property type="organism name" value="human"/>
</dbReference>
<dbReference type="AGR" id="HGNC:17575"/>
<dbReference type="CTD" id="23013"/>
<dbReference type="DisGeNET" id="23013"/>
<dbReference type="GeneCards" id="SPEN"/>
<dbReference type="HGNC" id="HGNC:17575">
    <property type="gene designation" value="SPEN"/>
</dbReference>
<dbReference type="HPA" id="ENSG00000065526">
    <property type="expression patterns" value="Low tissue specificity"/>
</dbReference>
<dbReference type="MalaCards" id="SPEN"/>
<dbReference type="MIM" id="613484">
    <property type="type" value="gene"/>
</dbReference>
<dbReference type="MIM" id="619312">
    <property type="type" value="phenotype"/>
</dbReference>
<dbReference type="neXtProt" id="NX_Q96T58"/>
<dbReference type="OpenTargets" id="ENSG00000065526"/>
<dbReference type="Orphanet" id="1606">
    <property type="disease" value="1p36 deletion syndrome"/>
</dbReference>
<dbReference type="Orphanet" id="662234">
    <property type="disease" value="Neurodevelopmental delay-congenital heart defects-intellectual disability syndrome"/>
</dbReference>
<dbReference type="PharmGKB" id="PA134895302"/>
<dbReference type="VEuPathDB" id="HostDB:ENSG00000065526"/>
<dbReference type="eggNOG" id="KOG0112">
    <property type="taxonomic scope" value="Eukaryota"/>
</dbReference>
<dbReference type="GeneTree" id="ENSGT00940000157087"/>
<dbReference type="HOGENOM" id="CLU_224781_0_0_1"/>
<dbReference type="InParanoid" id="Q96T58"/>
<dbReference type="OMA" id="CLHEVPP"/>
<dbReference type="OrthoDB" id="6407164at2759"/>
<dbReference type="PAN-GO" id="Q96T58">
    <property type="GO annotations" value="3 GO annotations based on evolutionary models"/>
</dbReference>
<dbReference type="PhylomeDB" id="Q96T58"/>
<dbReference type="TreeFam" id="TF315637"/>
<dbReference type="PathwayCommons" id="Q96T58"/>
<dbReference type="Reactome" id="R-HSA-9013422">
    <property type="pathway name" value="RHOBTB1 GTPase cycle"/>
</dbReference>
<dbReference type="SignaLink" id="Q96T58"/>
<dbReference type="SIGNOR" id="Q96T58"/>
<dbReference type="BioGRID-ORCS" id="23013">
    <property type="hits" value="63 hits in 1187 CRISPR screens"/>
</dbReference>
<dbReference type="ChiTaRS" id="SPEN">
    <property type="organism name" value="human"/>
</dbReference>
<dbReference type="EvolutionaryTrace" id="Q96T58"/>
<dbReference type="GeneWiki" id="SPEN"/>
<dbReference type="GenomeRNAi" id="23013"/>
<dbReference type="Pharos" id="Q96T58">
    <property type="development level" value="Tbio"/>
</dbReference>
<dbReference type="PRO" id="PR:Q96T58"/>
<dbReference type="Proteomes" id="UP000005640">
    <property type="component" value="Chromosome 1"/>
</dbReference>
<dbReference type="RNAct" id="Q96T58">
    <property type="molecule type" value="protein"/>
</dbReference>
<dbReference type="Bgee" id="ENSG00000065526">
    <property type="expression patterns" value="Expressed in ventricular zone and 201 other cell types or tissues"/>
</dbReference>
<dbReference type="ExpressionAtlas" id="Q96T58">
    <property type="expression patterns" value="baseline and differential"/>
</dbReference>
<dbReference type="GO" id="GO:0070062">
    <property type="term" value="C:extracellular exosome"/>
    <property type="evidence" value="ECO:0007005"/>
    <property type="project" value="UniProtKB"/>
</dbReference>
<dbReference type="GO" id="GO:0005654">
    <property type="term" value="C:nucleoplasm"/>
    <property type="evidence" value="ECO:0000314"/>
    <property type="project" value="HPA"/>
</dbReference>
<dbReference type="GO" id="GO:0005634">
    <property type="term" value="C:nucleus"/>
    <property type="evidence" value="ECO:0000318"/>
    <property type="project" value="GO_Central"/>
</dbReference>
<dbReference type="GO" id="GO:0017053">
    <property type="term" value="C:transcription repressor complex"/>
    <property type="evidence" value="ECO:0000314"/>
    <property type="project" value="BHF-UCL"/>
</dbReference>
<dbReference type="GO" id="GO:0003677">
    <property type="term" value="F:DNA binding"/>
    <property type="evidence" value="ECO:0007669"/>
    <property type="project" value="UniProtKB-KW"/>
</dbReference>
<dbReference type="GO" id="GO:0003729">
    <property type="term" value="F:mRNA binding"/>
    <property type="evidence" value="ECO:0000318"/>
    <property type="project" value="GO_Central"/>
</dbReference>
<dbReference type="GO" id="GO:0003723">
    <property type="term" value="F:RNA binding"/>
    <property type="evidence" value="ECO:0007005"/>
    <property type="project" value="UniProtKB"/>
</dbReference>
<dbReference type="GO" id="GO:0061629">
    <property type="term" value="F:RNA polymerase II-specific DNA-binding transcription factor binding"/>
    <property type="evidence" value="ECO:0000353"/>
    <property type="project" value="BHF-UCL"/>
</dbReference>
<dbReference type="GO" id="GO:0003714">
    <property type="term" value="F:transcription corepressor activity"/>
    <property type="evidence" value="ECO:0000314"/>
    <property type="project" value="BHF-UCL"/>
</dbReference>
<dbReference type="GO" id="GO:0045892">
    <property type="term" value="P:negative regulation of DNA-templated transcription"/>
    <property type="evidence" value="ECO:0000314"/>
    <property type="project" value="UniProtKB"/>
</dbReference>
<dbReference type="GO" id="GO:0000122">
    <property type="term" value="P:negative regulation of transcription by RNA polymerase II"/>
    <property type="evidence" value="ECO:0000314"/>
    <property type="project" value="BHF-UCL"/>
</dbReference>
<dbReference type="GO" id="GO:0007219">
    <property type="term" value="P:Notch signaling pathway"/>
    <property type="evidence" value="ECO:0007669"/>
    <property type="project" value="UniProtKB-KW"/>
</dbReference>
<dbReference type="GO" id="GO:0050769">
    <property type="term" value="P:positive regulation of neurogenesis"/>
    <property type="evidence" value="ECO:0000315"/>
    <property type="project" value="BHF-UCL"/>
</dbReference>
<dbReference type="GO" id="GO:0060816">
    <property type="term" value="P:random inactivation of X chromosome"/>
    <property type="evidence" value="ECO:0000314"/>
    <property type="project" value="FlyBase"/>
</dbReference>
<dbReference type="GO" id="GO:0006357">
    <property type="term" value="P:regulation of transcription by RNA polymerase II"/>
    <property type="evidence" value="ECO:0000318"/>
    <property type="project" value="GO_Central"/>
</dbReference>
<dbReference type="GO" id="GO:0031048">
    <property type="term" value="P:regulatory ncRNA-mediated heterochromatin formation"/>
    <property type="evidence" value="ECO:0000315"/>
    <property type="project" value="FlyBase"/>
</dbReference>
<dbReference type="CDD" id="cd12348">
    <property type="entry name" value="RRM1_SHARP"/>
    <property type="match status" value="1"/>
</dbReference>
<dbReference type="CDD" id="cd12349">
    <property type="entry name" value="RRM2_SHARP"/>
    <property type="match status" value="1"/>
</dbReference>
<dbReference type="CDD" id="cd12350">
    <property type="entry name" value="RRM3_SHARP"/>
    <property type="match status" value="1"/>
</dbReference>
<dbReference type="CDD" id="cd12351">
    <property type="entry name" value="RRM4_SHARP"/>
    <property type="match status" value="1"/>
</dbReference>
<dbReference type="CDD" id="cd21543">
    <property type="entry name" value="SPOC_SHARP"/>
    <property type="match status" value="1"/>
</dbReference>
<dbReference type="DisProt" id="DP02375"/>
<dbReference type="FunFam" id="3.30.70.330:FF:000088">
    <property type="entry name" value="msx2-interacting protein-like isoform X1"/>
    <property type="match status" value="1"/>
</dbReference>
<dbReference type="FunFam" id="3.30.70.330:FF:000118">
    <property type="entry name" value="msx2-interacting protein-like isoform X1"/>
    <property type="match status" value="1"/>
</dbReference>
<dbReference type="FunFam" id="3.30.70.330:FF:000143">
    <property type="entry name" value="msx2-interacting protein-like isoform X1"/>
    <property type="match status" value="1"/>
</dbReference>
<dbReference type="FunFam" id="3.30.70.330:FF:000150">
    <property type="entry name" value="msx2-interacting protein-like isoform X1"/>
    <property type="match status" value="1"/>
</dbReference>
<dbReference type="FunFam" id="2.40.290.10:FF:000002">
    <property type="entry name" value="Spen family transcriptional repressor"/>
    <property type="match status" value="1"/>
</dbReference>
<dbReference type="Gene3D" id="2.40.290.10">
    <property type="match status" value="1"/>
</dbReference>
<dbReference type="Gene3D" id="3.30.70.330">
    <property type="match status" value="4"/>
</dbReference>
<dbReference type="IDEAL" id="IID00578"/>
<dbReference type="InterPro" id="IPR049095">
    <property type="entry name" value="MINT_MID"/>
</dbReference>
<dbReference type="InterPro" id="IPR049094">
    <property type="entry name" value="MINT_RAM7"/>
</dbReference>
<dbReference type="InterPro" id="IPR049093">
    <property type="entry name" value="MINT_RID"/>
</dbReference>
<dbReference type="InterPro" id="IPR012677">
    <property type="entry name" value="Nucleotide-bd_a/b_plait_sf"/>
</dbReference>
<dbReference type="InterPro" id="IPR035979">
    <property type="entry name" value="RBD_domain_sf"/>
</dbReference>
<dbReference type="InterPro" id="IPR000504">
    <property type="entry name" value="RRM_dom"/>
</dbReference>
<dbReference type="InterPro" id="IPR034172">
    <property type="entry name" value="SHARP_RRM1"/>
</dbReference>
<dbReference type="InterPro" id="IPR034173">
    <property type="entry name" value="SHARP_RRM2"/>
</dbReference>
<dbReference type="InterPro" id="IPR034174">
    <property type="entry name" value="SHARP_RRM3"/>
</dbReference>
<dbReference type="InterPro" id="IPR034175">
    <property type="entry name" value="SHARP_RRM4"/>
</dbReference>
<dbReference type="InterPro" id="IPR016194">
    <property type="entry name" value="SPOC-like_C_dom_sf"/>
</dbReference>
<dbReference type="InterPro" id="IPR012921">
    <property type="entry name" value="SPOC_C"/>
</dbReference>
<dbReference type="InterPro" id="IPR010912">
    <property type="entry name" value="SPOC_met"/>
</dbReference>
<dbReference type="PANTHER" id="PTHR23189">
    <property type="entry name" value="RNA RECOGNITION MOTIF-CONTAINING"/>
    <property type="match status" value="1"/>
</dbReference>
<dbReference type="Pfam" id="PF20809">
    <property type="entry name" value="MINT_MID"/>
    <property type="match status" value="1"/>
</dbReference>
<dbReference type="Pfam" id="PF20808">
    <property type="entry name" value="MINT_RAM7"/>
    <property type="match status" value="1"/>
</dbReference>
<dbReference type="Pfam" id="PF20810">
    <property type="entry name" value="MINT_RID"/>
    <property type="match status" value="1"/>
</dbReference>
<dbReference type="Pfam" id="PF00076">
    <property type="entry name" value="RRM_1"/>
    <property type="match status" value="4"/>
</dbReference>
<dbReference type="Pfam" id="PF07744">
    <property type="entry name" value="SPOC"/>
    <property type="match status" value="1"/>
</dbReference>
<dbReference type="SMART" id="SM00360">
    <property type="entry name" value="RRM"/>
    <property type="match status" value="4"/>
</dbReference>
<dbReference type="SUPFAM" id="SSF54928">
    <property type="entry name" value="RNA-binding domain, RBD"/>
    <property type="match status" value="2"/>
</dbReference>
<dbReference type="SUPFAM" id="SSF100939">
    <property type="entry name" value="SPOC domain-like"/>
    <property type="match status" value="1"/>
</dbReference>
<dbReference type="PROSITE" id="PS50102">
    <property type="entry name" value="RRM"/>
    <property type="match status" value="4"/>
</dbReference>
<dbReference type="PROSITE" id="PS50917">
    <property type="entry name" value="SPOC"/>
    <property type="match status" value="1"/>
</dbReference>
<feature type="chain" id="PRO_0000081627" description="Msx2-interacting protein">
    <location>
        <begin position="1"/>
        <end position="3664"/>
    </location>
</feature>
<feature type="domain" description="RRM 1" evidence="4">
    <location>
        <begin position="6"/>
        <end position="81"/>
    </location>
</feature>
<feature type="domain" description="RRM 2" evidence="4">
    <location>
        <begin position="335"/>
        <end position="415"/>
    </location>
</feature>
<feature type="domain" description="RRM 3" evidence="4">
    <location>
        <begin position="438"/>
        <end position="513"/>
    </location>
</feature>
<feature type="domain" description="RRM 4" evidence="4">
    <location>
        <begin position="517"/>
        <end position="589"/>
    </location>
</feature>
<feature type="domain" description="RID">
    <location>
        <begin position="2201"/>
        <end position="2707"/>
    </location>
</feature>
<feature type="domain" description="SPOC" evidence="5">
    <location>
        <begin position="3498"/>
        <end position="3664"/>
    </location>
</feature>
<feature type="DNA-binding region" evidence="1">
    <location>
        <begin position="1"/>
        <end position="573"/>
    </location>
</feature>
<feature type="region of interest" description="Disordered" evidence="6">
    <location>
        <begin position="70"/>
        <end position="89"/>
    </location>
</feature>
<feature type="region of interest" description="Disordered" evidence="6">
    <location>
        <begin position="103"/>
        <end position="164"/>
    </location>
</feature>
<feature type="region of interest" description="Disordered" evidence="6">
    <location>
        <begin position="183"/>
        <end position="209"/>
    </location>
</feature>
<feature type="region of interest" description="Disordered" evidence="6">
    <location>
        <begin position="225"/>
        <end position="330"/>
    </location>
</feature>
<feature type="region of interest" description="Disordered" evidence="6">
    <location>
        <begin position="678"/>
        <end position="871"/>
    </location>
</feature>
<feature type="region of interest" description="Disordered" evidence="6">
    <location>
        <begin position="918"/>
        <end position="941"/>
    </location>
</feature>
<feature type="region of interest" description="Disordered" evidence="6">
    <location>
        <begin position="957"/>
        <end position="1020"/>
    </location>
</feature>
<feature type="region of interest" description="Disordered" evidence="6">
    <location>
        <begin position="1070"/>
        <end position="1287"/>
    </location>
</feature>
<feature type="region of interest" description="Disordered" evidence="6">
    <location>
        <begin position="1366"/>
        <end position="1397"/>
    </location>
</feature>
<feature type="region of interest" description="Disordered" evidence="6">
    <location>
        <begin position="1497"/>
        <end position="1524"/>
    </location>
</feature>
<feature type="region of interest" description="Disordered" evidence="6">
    <location>
        <begin position="1588"/>
        <end position="2171"/>
    </location>
</feature>
<feature type="region of interest" description="Interaction with MSX2" evidence="1">
    <location>
        <begin position="2130"/>
        <end position="2464"/>
    </location>
</feature>
<feature type="region of interest" description="Disordered" evidence="6">
    <location>
        <begin position="2185"/>
        <end position="2532"/>
    </location>
</feature>
<feature type="region of interest" description="Disordered" evidence="6">
    <location>
        <begin position="2566"/>
        <end position="2590"/>
    </location>
</feature>
<feature type="region of interest" description="Interaction with RBPSUH" evidence="1">
    <location>
        <begin position="2709"/>
        <end position="2870"/>
    </location>
</feature>
<feature type="region of interest" description="Disordered" evidence="6">
    <location>
        <begin position="2775"/>
        <end position="2806"/>
    </location>
</feature>
<feature type="region of interest" description="Disordered" evidence="6">
    <location>
        <begin position="2847"/>
        <end position="2875"/>
    </location>
</feature>
<feature type="region of interest" description="Disordered" evidence="6">
    <location>
        <begin position="2978"/>
        <end position="3010"/>
    </location>
</feature>
<feature type="region of interest" description="Disordered" evidence="6">
    <location>
        <begin position="3022"/>
        <end position="3047"/>
    </location>
</feature>
<feature type="region of interest" description="Disordered" evidence="6">
    <location>
        <begin position="3135"/>
        <end position="3156"/>
    </location>
</feature>
<feature type="region of interest" description="Disordered" evidence="6">
    <location>
        <begin position="3208"/>
        <end position="3265"/>
    </location>
</feature>
<feature type="region of interest" description="Disordered" evidence="6">
    <location>
        <begin position="3327"/>
        <end position="3492"/>
    </location>
</feature>
<feature type="coiled-coil region" evidence="3">
    <location>
        <begin position="688"/>
        <end position="715"/>
    </location>
</feature>
<feature type="coiled-coil region" evidence="3">
    <location>
        <begin position="977"/>
        <end position="1004"/>
    </location>
</feature>
<feature type="coiled-coil region" evidence="3">
    <location>
        <begin position="1170"/>
        <end position="1191"/>
    </location>
</feature>
<feature type="coiled-coil region" evidence="3">
    <location>
        <begin position="1408"/>
        <end position="1428"/>
    </location>
</feature>
<feature type="coiled-coil region" evidence="3">
    <location>
        <begin position="1496"/>
        <end position="1529"/>
    </location>
</feature>
<feature type="coiled-coil region" evidence="3">
    <location>
        <begin position="1592"/>
        <end position="1612"/>
    </location>
</feature>
<feature type="coiled-coil region" evidence="3">
    <location>
        <begin position="1928"/>
        <end position="1944"/>
    </location>
</feature>
<feature type="compositionally biased region" description="Basic and acidic residues" evidence="6">
    <location>
        <begin position="123"/>
        <end position="164"/>
    </location>
</feature>
<feature type="compositionally biased region" description="Basic and acidic residues" evidence="6">
    <location>
        <begin position="192"/>
        <end position="207"/>
    </location>
</feature>
<feature type="compositionally biased region" description="Basic and acidic residues" evidence="6">
    <location>
        <begin position="225"/>
        <end position="237"/>
    </location>
</feature>
<feature type="compositionally biased region" description="Low complexity" evidence="6">
    <location>
        <begin position="245"/>
        <end position="309"/>
    </location>
</feature>
<feature type="compositionally biased region" description="Basic and acidic residues" evidence="6">
    <location>
        <begin position="678"/>
        <end position="723"/>
    </location>
</feature>
<feature type="compositionally biased region" description="Basic and acidic residues" evidence="6">
    <location>
        <begin position="747"/>
        <end position="761"/>
    </location>
</feature>
<feature type="compositionally biased region" description="Low complexity" evidence="6">
    <location>
        <begin position="762"/>
        <end position="772"/>
    </location>
</feature>
<feature type="compositionally biased region" description="Basic and acidic residues" evidence="6">
    <location>
        <begin position="773"/>
        <end position="820"/>
    </location>
</feature>
<feature type="compositionally biased region" description="Basic and acidic residues" evidence="6">
    <location>
        <begin position="841"/>
        <end position="871"/>
    </location>
</feature>
<feature type="compositionally biased region" description="Basic and acidic residues" evidence="6">
    <location>
        <begin position="925"/>
        <end position="941"/>
    </location>
</feature>
<feature type="compositionally biased region" description="Basic and acidic residues" evidence="6">
    <location>
        <begin position="993"/>
        <end position="1020"/>
    </location>
</feature>
<feature type="compositionally biased region" description="Low complexity" evidence="6">
    <location>
        <begin position="1071"/>
        <end position="1082"/>
    </location>
</feature>
<feature type="compositionally biased region" description="Basic and acidic residues" evidence="6">
    <location>
        <begin position="1123"/>
        <end position="1212"/>
    </location>
</feature>
<feature type="compositionally biased region" description="Basic and acidic residues" evidence="6">
    <location>
        <begin position="1231"/>
        <end position="1257"/>
    </location>
</feature>
<feature type="compositionally biased region" description="Basic and acidic residues" evidence="6">
    <location>
        <begin position="1501"/>
        <end position="1524"/>
    </location>
</feature>
<feature type="compositionally biased region" description="Basic and acidic residues" evidence="6">
    <location>
        <begin position="1588"/>
        <end position="1631"/>
    </location>
</feature>
<feature type="compositionally biased region" description="Low complexity" evidence="6">
    <location>
        <begin position="1633"/>
        <end position="1646"/>
    </location>
</feature>
<feature type="compositionally biased region" description="Basic and acidic residues" evidence="6">
    <location>
        <begin position="1657"/>
        <end position="1674"/>
    </location>
</feature>
<feature type="compositionally biased region" description="Low complexity" evidence="6">
    <location>
        <begin position="1686"/>
        <end position="1695"/>
    </location>
</feature>
<feature type="compositionally biased region" description="Basic and acidic residues" evidence="6">
    <location>
        <begin position="1764"/>
        <end position="1779"/>
    </location>
</feature>
<feature type="compositionally biased region" description="Low complexity" evidence="6">
    <location>
        <begin position="1791"/>
        <end position="1802"/>
    </location>
</feature>
<feature type="compositionally biased region" description="Basic and acidic residues" evidence="6">
    <location>
        <begin position="1839"/>
        <end position="1853"/>
    </location>
</feature>
<feature type="compositionally biased region" description="Basic and acidic residues" evidence="6">
    <location>
        <begin position="1861"/>
        <end position="1876"/>
    </location>
</feature>
<feature type="compositionally biased region" description="Basic and acidic residues" evidence="6">
    <location>
        <begin position="1912"/>
        <end position="1925"/>
    </location>
</feature>
<feature type="compositionally biased region" description="Basic residues" evidence="6">
    <location>
        <begin position="1949"/>
        <end position="1958"/>
    </location>
</feature>
<feature type="compositionally biased region" description="Basic and acidic residues" evidence="6">
    <location>
        <begin position="2000"/>
        <end position="2010"/>
    </location>
</feature>
<feature type="compositionally biased region" description="Basic and acidic residues" evidence="6">
    <location>
        <begin position="2026"/>
        <end position="2054"/>
    </location>
</feature>
<feature type="compositionally biased region" description="Basic and acidic residues" evidence="6">
    <location>
        <begin position="2062"/>
        <end position="2073"/>
    </location>
</feature>
<feature type="compositionally biased region" description="Basic and acidic residues" evidence="6">
    <location>
        <begin position="2122"/>
        <end position="2132"/>
    </location>
</feature>
<feature type="compositionally biased region" description="Basic and acidic residues" evidence="6">
    <location>
        <begin position="2140"/>
        <end position="2153"/>
    </location>
</feature>
<feature type="compositionally biased region" description="Basic and acidic residues" evidence="6">
    <location>
        <begin position="2316"/>
        <end position="2328"/>
    </location>
</feature>
<feature type="compositionally biased region" description="Basic residues" evidence="6">
    <location>
        <begin position="2329"/>
        <end position="2345"/>
    </location>
</feature>
<feature type="compositionally biased region" description="Basic and acidic residues" evidence="6">
    <location>
        <begin position="2380"/>
        <end position="2391"/>
    </location>
</feature>
<feature type="compositionally biased region" description="Polar residues" evidence="6">
    <location>
        <begin position="2394"/>
        <end position="2415"/>
    </location>
</feature>
<feature type="compositionally biased region" description="Pro residues" evidence="6">
    <location>
        <begin position="2429"/>
        <end position="2438"/>
    </location>
</feature>
<feature type="compositionally biased region" description="Pro residues" evidence="6">
    <location>
        <begin position="2459"/>
        <end position="2471"/>
    </location>
</feature>
<feature type="compositionally biased region" description="Basic and acidic residues" evidence="6">
    <location>
        <begin position="2577"/>
        <end position="2586"/>
    </location>
</feature>
<feature type="compositionally biased region" description="Polar residues" evidence="6">
    <location>
        <begin position="2847"/>
        <end position="2867"/>
    </location>
</feature>
<feature type="compositionally biased region" description="Low complexity" evidence="6">
    <location>
        <begin position="3032"/>
        <end position="3047"/>
    </location>
</feature>
<feature type="compositionally biased region" description="Pro residues" evidence="6">
    <location>
        <begin position="3244"/>
        <end position="3262"/>
    </location>
</feature>
<feature type="compositionally biased region" description="Pro residues" evidence="6">
    <location>
        <begin position="3343"/>
        <end position="3356"/>
    </location>
</feature>
<feature type="compositionally biased region" description="Polar residues" evidence="6">
    <location>
        <begin position="3384"/>
        <end position="3399"/>
    </location>
</feature>
<feature type="compositionally biased region" description="Polar residues" evidence="6">
    <location>
        <begin position="3417"/>
        <end position="3436"/>
    </location>
</feature>
<feature type="modified residue" description="Phosphoserine" evidence="20">
    <location>
        <position position="99"/>
    </location>
</feature>
<feature type="modified residue" description="Omega-N-methylarginine" evidence="21">
    <location>
        <position position="108"/>
    </location>
</feature>
<feature type="modified residue" description="Phosphoserine" evidence="20">
    <location>
        <position position="188"/>
    </location>
</feature>
<feature type="modified residue" description="Phosphoserine" evidence="20">
    <location>
        <position position="190"/>
    </location>
</feature>
<feature type="modified residue" description="Phosphoserine" evidence="18">
    <location>
        <position position="309"/>
    </location>
</feature>
<feature type="modified residue" description="Phosphoserine" evidence="18">
    <location>
        <position position="623"/>
    </location>
</feature>
<feature type="modified residue" description="Phosphoserine" evidence="20">
    <location>
        <position position="725"/>
    </location>
</feature>
<feature type="modified residue" description="Phosphoserine" evidence="18 19 20">
    <location>
        <position position="727"/>
    </location>
</feature>
<feature type="modified residue" description="Phosphoserine" evidence="16 20">
    <location>
        <position position="736"/>
    </location>
</feature>
<feature type="modified residue" description="Phosphoserine" evidence="16 20">
    <location>
        <position position="740"/>
    </location>
</feature>
<feature type="modified residue" description="Phosphoserine" evidence="20">
    <location>
        <position position="770"/>
    </location>
</feature>
<feature type="modified residue" description="Phosphoserine" evidence="2">
    <location>
        <position position="830"/>
    </location>
</feature>
<feature type="modified residue" description="Phosphoserine" evidence="2">
    <location>
        <position position="833"/>
    </location>
</feature>
<feature type="modified residue" description="Phosphoserine" evidence="20">
    <location>
        <position position="847"/>
    </location>
</feature>
<feature type="modified residue" description="Phosphoserine" evidence="19 20 22">
    <location>
        <position position="1062"/>
    </location>
</feature>
<feature type="modified residue" description="Phosphothreonine" evidence="20">
    <location>
        <position position="1140"/>
    </location>
</feature>
<feature type="modified residue" description="Phosphoserine" evidence="20">
    <location>
        <position position="1168"/>
    </location>
</feature>
<feature type="modified residue" description="Phosphoserine" evidence="16 20">
    <location>
        <position position="1194"/>
    </location>
</feature>
<feature type="modified residue" description="Phosphoserine" evidence="17 19 20">
    <location>
        <position position="1222"/>
    </location>
</feature>
<feature type="modified residue" description="Phosphoserine" evidence="18">
    <location>
        <position position="1252"/>
    </location>
</feature>
<feature type="modified residue" description="Phosphoserine" evidence="19">
    <location>
        <position position="1261"/>
    </location>
</feature>
<feature type="modified residue" description="Phosphoserine" evidence="15 17 18 19 20 22">
    <location>
        <position position="1268"/>
    </location>
</feature>
<feature type="modified residue" description="Phosphoserine" evidence="15 17 18 19 20 22">
    <location>
        <position position="1278"/>
    </location>
</feature>
<feature type="modified residue" description="Phosphoserine" evidence="15 20">
    <location>
        <position position="1283"/>
    </location>
</feature>
<feature type="modified residue" description="Phosphoserine" evidence="16 18 20">
    <location>
        <position position="1287"/>
    </location>
</feature>
<feature type="modified residue" description="Phosphoserine" evidence="18 20">
    <location>
        <position position="1333"/>
    </location>
</feature>
<feature type="modified residue" description="Phosphoserine" evidence="15 16 19 20">
    <location>
        <position position="1380"/>
    </location>
</feature>
<feature type="modified residue" description="Phosphoserine" evidence="15 16 19 20">
    <location>
        <position position="1382"/>
    </location>
</feature>
<feature type="modified residue" description="Phosphothreonine" evidence="16">
    <location>
        <position position="1439"/>
    </location>
</feature>
<feature type="modified residue" description="Phosphothreonine" evidence="16">
    <location>
        <position position="1441"/>
    </location>
</feature>
<feature type="modified residue" description="Phosphothreonine" evidence="20">
    <location>
        <position position="1619"/>
    </location>
</feature>
<feature type="modified residue" description="Phosphothreonine" evidence="18 20">
    <location>
        <position position="1633"/>
    </location>
</feature>
<feature type="modified residue" description="Phosphothreonine" evidence="20">
    <location>
        <position position="1826"/>
    </location>
</feature>
<feature type="modified residue" description="Phosphoserine" evidence="16 18">
    <location>
        <position position="1897"/>
    </location>
</feature>
<feature type="modified residue" description="Phosphoserine" evidence="20">
    <location>
        <position position="1918"/>
    </location>
</feature>
<feature type="modified residue" description="Phosphothreonine" evidence="17">
    <location>
        <position position="1947"/>
    </location>
</feature>
<feature type="modified residue" description="Phosphoserine" evidence="18 19 20">
    <location>
        <position position="2101"/>
    </location>
</feature>
<feature type="modified residue" description="Phosphoserine" evidence="16 18 19">
    <location>
        <position position="2120"/>
    </location>
</feature>
<feature type="modified residue" description="Phosphoserine" evidence="16 20">
    <location>
        <position position="2126"/>
    </location>
</feature>
<feature type="modified residue" description="Phosphoserine" evidence="18 20">
    <location>
        <position position="2159"/>
    </location>
</feature>
<feature type="modified residue" description="Phosphothreonine" evidence="20">
    <location>
        <position position="2163"/>
    </location>
</feature>
<feature type="modified residue" description="Phosphoserine" evidence="16">
    <location>
        <position position="2366"/>
    </location>
</feature>
<feature type="modified residue" description="Phosphothreonine" evidence="20 22">
    <location>
        <position position="2393"/>
    </location>
</feature>
<feature type="modified residue" description="Phosphothreonine" evidence="16 20">
    <location>
        <position position="2421"/>
    </location>
</feature>
<feature type="modified residue" description="Phosphoserine" evidence="17">
    <location>
        <position position="2452"/>
    </location>
</feature>
<feature type="modified residue" description="Phosphoserine" evidence="22">
    <location>
        <position position="2456"/>
    </location>
</feature>
<feature type="modified residue" description="Phosphothreonine" evidence="17">
    <location>
        <position position="2460"/>
    </location>
</feature>
<feature type="modified residue" description="Phosphoserine" evidence="20 22">
    <location>
        <position position="2481"/>
    </location>
</feature>
<feature type="modified residue" description="Phosphoserine" evidence="22">
    <location>
        <position position="2486"/>
    </location>
</feature>
<feature type="modified residue" description="Phosphoserine" evidence="20">
    <location>
        <position position="2493"/>
    </location>
</feature>
<feature type="modified residue" description="Phosphothreonine" evidence="16">
    <location>
        <position position="2938"/>
    </location>
</feature>
<feature type="modified residue" description="Phosphothreonine" evidence="16">
    <location>
        <position position="2950"/>
    </location>
</feature>
<feature type="modified residue" description="Asymmetric dimethylarginine" evidence="21">
    <location>
        <position position="3113"/>
    </location>
</feature>
<feature type="modified residue" description="Asymmetric dimethylarginine" evidence="21">
    <location>
        <position position="3121"/>
    </location>
</feature>
<feature type="modified residue" description="Phosphoserine" evidence="16">
    <location>
        <position position="3433"/>
    </location>
</feature>
<feature type="sequence variant" id="VAR_085747" description="In RATARS." evidence="13">
    <location>
        <begin position="535"/>
        <end position="3664"/>
    </location>
</feature>
<feature type="sequence variant" id="VAR_085748" description="In RATARS." evidence="13">
    <location>
        <begin position="672"/>
        <end position="3664"/>
    </location>
</feature>
<feature type="sequence variant" id="VAR_085749" description="In RATARS." evidence="13">
    <location>
        <begin position="701"/>
        <end position="3664"/>
    </location>
</feature>
<feature type="sequence variant" id="VAR_017119" description="In dbSNP:rs848208.">
    <original>A</original>
    <variation>V</variation>
    <location>
        <position position="970"/>
    </location>
</feature>
<feature type="sequence variant" id="VAR_035483" description="In a breast cancer sample; somatic mutation." evidence="12">
    <original>D</original>
    <variation>H</variation>
    <location>
        <position position="990"/>
    </location>
</feature>
<feature type="sequence variant" id="VAR_085750" description="In RATARS." evidence="13">
    <location>
        <begin position="1067"/>
        <end position="3664"/>
    </location>
</feature>
<feature type="sequence variant" id="VAR_017120" description="In dbSNP:rs848209." evidence="10">
    <original>L</original>
    <variation>P</variation>
    <location>
        <position position="1091"/>
    </location>
</feature>
<feature type="sequence variant" id="VAR_085751" description="In RATARS." evidence="13">
    <location>
        <begin position="1170"/>
        <end position="3664"/>
    </location>
</feature>
<feature type="sequence variant" id="VAR_085752" description="In RATARS." evidence="13">
    <location>
        <begin position="1265"/>
        <end position="3664"/>
    </location>
</feature>
<feature type="sequence variant" id="VAR_052208" description="In dbSNP:rs12095818.">
    <original>D</original>
    <variation>E</variation>
    <location>
        <position position="1363"/>
    </location>
</feature>
<feature type="sequence variant" id="VAR_035484" description="In a breast cancer sample; somatic mutation." evidence="12">
    <original>R</original>
    <variation>I</variation>
    <location>
        <position position="1488"/>
    </location>
</feature>
<feature type="sequence variant" id="VAR_085753" description="In RATARS; uncertain significance." evidence="13">
    <location>
        <begin position="1798"/>
        <end position="3664"/>
    </location>
</feature>
<feature type="sequence variant" id="VAR_085754" description="In RATARS; uncertain significance." evidence="13">
    <location>
        <begin position="1936"/>
        <end position="3664"/>
    </location>
</feature>
<feature type="sequence variant" id="VAR_085755" description="In RATARS." evidence="13">
    <location>
        <begin position="2020"/>
        <end position="3664"/>
    </location>
</feature>
<feature type="sequence variant" id="VAR_085756" description="In RATARS; uncertain significance." evidence="13">
    <location>
        <begin position="2267"/>
        <end position="3664"/>
    </location>
</feature>
<feature type="sequence variant" id="VAR_085757" description="In RATARS." evidence="13">
    <location>
        <begin position="2342"/>
        <end position="3664"/>
    </location>
</feature>
<feature type="sequence variant" id="VAR_017121" description="In dbSNP:rs848210.">
    <original>N</original>
    <variation>D</variation>
    <location>
        <position position="2360"/>
    </location>
</feature>
<feature type="sequence variant" id="VAR_085758" description="In RATARS." evidence="13">
    <location>
        <begin position="2442"/>
        <end position="3664"/>
    </location>
</feature>
<feature type="sequence conflict" description="In Ref. 4." evidence="14" ref="4">
    <original>G</original>
    <variation>D</variation>
    <location>
        <position position="956"/>
    </location>
</feature>
<feature type="strand" evidence="25">
    <location>
        <begin position="336"/>
        <end position="340"/>
    </location>
</feature>
<feature type="helix" evidence="25">
    <location>
        <begin position="348"/>
        <end position="359"/>
    </location>
</feature>
<feature type="helix" evidence="25">
    <location>
        <begin position="360"/>
        <end position="362"/>
    </location>
</feature>
<feature type="strand" evidence="25">
    <location>
        <begin position="365"/>
        <end position="371"/>
    </location>
</feature>
<feature type="turn" evidence="25">
    <location>
        <begin position="374"/>
        <end position="376"/>
    </location>
</feature>
<feature type="strand" evidence="25">
    <location>
        <begin position="378"/>
        <end position="385"/>
    </location>
</feature>
<feature type="helix" evidence="25">
    <location>
        <begin position="386"/>
        <end position="395"/>
    </location>
</feature>
<feature type="turn" evidence="25">
    <location>
        <begin position="396"/>
        <end position="398"/>
    </location>
</feature>
<feature type="strand" evidence="25">
    <location>
        <begin position="407"/>
        <end position="410"/>
    </location>
</feature>
<feature type="helix" evidence="25">
    <location>
        <begin position="414"/>
        <end position="422"/>
    </location>
</feature>
<feature type="strand" evidence="25">
    <location>
        <begin position="438"/>
        <end position="444"/>
    </location>
</feature>
<feature type="helix" evidence="25">
    <location>
        <begin position="451"/>
        <end position="458"/>
    </location>
</feature>
<feature type="strand" evidence="25">
    <location>
        <begin position="464"/>
        <end position="472"/>
    </location>
</feature>
<feature type="strand" evidence="25">
    <location>
        <begin position="475"/>
        <end position="485"/>
    </location>
</feature>
<feature type="helix" evidence="25">
    <location>
        <begin position="486"/>
        <end position="496"/>
    </location>
</feature>
<feature type="strand" evidence="25">
    <location>
        <begin position="507"/>
        <end position="510"/>
    </location>
</feature>
<feature type="strand" evidence="25">
    <location>
        <begin position="517"/>
        <end position="522"/>
    </location>
</feature>
<feature type="helix" evidence="25">
    <location>
        <begin position="530"/>
        <end position="537"/>
    </location>
</feature>
<feature type="helix" evidence="25">
    <location>
        <begin position="538"/>
        <end position="540"/>
    </location>
</feature>
<feature type="strand" evidence="25">
    <location>
        <begin position="543"/>
        <end position="549"/>
    </location>
</feature>
<feature type="turn" evidence="25">
    <location>
        <begin position="550"/>
        <end position="553"/>
    </location>
</feature>
<feature type="strand" evidence="25">
    <location>
        <begin position="554"/>
        <end position="560"/>
    </location>
</feature>
<feature type="helix" evidence="25">
    <location>
        <begin position="562"/>
        <end position="572"/>
    </location>
</feature>
<feature type="strand" evidence="25">
    <location>
        <begin position="575"/>
        <end position="577"/>
    </location>
</feature>
<feature type="strand" evidence="25">
    <location>
        <begin position="583"/>
        <end position="586"/>
    </location>
</feature>
<feature type="helix" evidence="25">
    <location>
        <begin position="589"/>
        <end position="601"/>
    </location>
</feature>
<feature type="helix" evidence="25">
    <location>
        <begin position="609"/>
        <end position="618"/>
    </location>
</feature>
<feature type="helix" evidence="23">
    <location>
        <begin position="3501"/>
        <end position="3504"/>
    </location>
</feature>
<feature type="strand" evidence="26">
    <location>
        <begin position="3507"/>
        <end position="3515"/>
    </location>
</feature>
<feature type="strand" evidence="26">
    <location>
        <begin position="3518"/>
        <end position="3529"/>
    </location>
</feature>
<feature type="helix" evidence="26">
    <location>
        <begin position="3532"/>
        <end position="3537"/>
    </location>
</feature>
<feature type="strand" evidence="24">
    <location>
        <begin position="3541"/>
        <end position="3543"/>
    </location>
</feature>
<feature type="strand" evidence="26">
    <location>
        <begin position="3547"/>
        <end position="3549"/>
    </location>
</feature>
<feature type="strand" evidence="26">
    <location>
        <begin position="3551"/>
        <end position="3554"/>
    </location>
</feature>
<feature type="helix" evidence="26">
    <location>
        <begin position="3557"/>
        <end position="3565"/>
    </location>
</feature>
<feature type="strand" evidence="26">
    <location>
        <begin position="3572"/>
        <end position="3580"/>
    </location>
</feature>
<feature type="helix" evidence="26">
    <location>
        <begin position="3585"/>
        <end position="3598"/>
    </location>
</feature>
<feature type="helix" evidence="26">
    <location>
        <begin position="3600"/>
        <end position="3606"/>
    </location>
</feature>
<feature type="strand" evidence="26">
    <location>
        <begin position="3608"/>
        <end position="3615"/>
    </location>
</feature>
<feature type="turn" evidence="24">
    <location>
        <begin position="3617"/>
        <end position="3619"/>
    </location>
</feature>
<feature type="strand" evidence="26">
    <location>
        <begin position="3621"/>
        <end position="3629"/>
    </location>
</feature>
<feature type="helix" evidence="26">
    <location>
        <begin position="3633"/>
        <end position="3642"/>
    </location>
</feature>
<feature type="helix" evidence="26">
    <location>
        <begin position="3644"/>
        <end position="3650"/>
    </location>
</feature>
<feature type="turn" evidence="26">
    <location>
        <begin position="3651"/>
        <end position="3653"/>
    </location>
</feature>
<feature type="strand" evidence="26">
    <location>
        <begin position="3657"/>
        <end position="3663"/>
    </location>
</feature>
<keyword id="KW-0002">3D-structure</keyword>
<keyword id="KW-0010">Activator</keyword>
<keyword id="KW-0175">Coiled coil</keyword>
<keyword id="KW-0225">Disease variant</keyword>
<keyword id="KW-0238">DNA-binding</keyword>
<keyword id="KW-0945">Host-virus interaction</keyword>
<keyword id="KW-0991">Intellectual disability</keyword>
<keyword id="KW-0488">Methylation</keyword>
<keyword id="KW-0914">Notch signaling pathway</keyword>
<keyword id="KW-0539">Nucleus</keyword>
<keyword id="KW-0597">Phosphoprotein</keyword>
<keyword id="KW-1267">Proteomics identification</keyword>
<keyword id="KW-1185">Reference proteome</keyword>
<keyword id="KW-0677">Repeat</keyword>
<keyword id="KW-0678">Repressor</keyword>
<keyword id="KW-0694">RNA-binding</keyword>
<keyword id="KW-0804">Transcription</keyword>
<keyword id="KW-0805">Transcription regulation</keyword>
<reference key="1">
    <citation type="journal article" date="2001" name="Genes Dev.">
        <title>Sharp, an inducible cofactor that integrates nuclear receptor repression and activation.</title>
        <authorList>
            <person name="Shi Y."/>
            <person name="Downes M."/>
            <person name="Xie W."/>
            <person name="Kao H.-Y."/>
            <person name="Ordentlich P."/>
            <person name="Tsai C.-C."/>
            <person name="Hon M."/>
            <person name="Evans R.M."/>
        </authorList>
    </citation>
    <scope>NUCLEOTIDE SEQUENCE [MRNA]</scope>
    <scope>FUNCTION</scope>
    <scope>SUBCELLULAR LOCATION</scope>
    <scope>INDUCTION</scope>
    <scope>RNA-BINDING</scope>
    <scope>INTERACTION WITH NCOR2; HDAC1; HDAC2; RBBP4; MBD3; RAR AND MTA1L1</scope>
    <source>
        <tissue>Liver</tissue>
        <tissue>Pituitary</tissue>
    </source>
</reference>
<reference key="2">
    <citation type="journal article" date="2006" name="Nature">
        <title>The DNA sequence and biological annotation of human chromosome 1.</title>
        <authorList>
            <person name="Gregory S.G."/>
            <person name="Barlow K.F."/>
            <person name="McLay K.E."/>
            <person name="Kaul R."/>
            <person name="Swarbreck D."/>
            <person name="Dunham A."/>
            <person name="Scott C.E."/>
            <person name="Howe K.L."/>
            <person name="Woodfine K."/>
            <person name="Spencer C.C.A."/>
            <person name="Jones M.C."/>
            <person name="Gillson C."/>
            <person name="Searle S."/>
            <person name="Zhou Y."/>
            <person name="Kokocinski F."/>
            <person name="McDonald L."/>
            <person name="Evans R."/>
            <person name="Phillips K."/>
            <person name="Atkinson A."/>
            <person name="Cooper R."/>
            <person name="Jones C."/>
            <person name="Hall R.E."/>
            <person name="Andrews T.D."/>
            <person name="Lloyd C."/>
            <person name="Ainscough R."/>
            <person name="Almeida J.P."/>
            <person name="Ambrose K.D."/>
            <person name="Anderson F."/>
            <person name="Andrew R.W."/>
            <person name="Ashwell R.I.S."/>
            <person name="Aubin K."/>
            <person name="Babbage A.K."/>
            <person name="Bagguley C.L."/>
            <person name="Bailey J."/>
            <person name="Beasley H."/>
            <person name="Bethel G."/>
            <person name="Bird C.P."/>
            <person name="Bray-Allen S."/>
            <person name="Brown J.Y."/>
            <person name="Brown A.J."/>
            <person name="Buckley D."/>
            <person name="Burton J."/>
            <person name="Bye J."/>
            <person name="Carder C."/>
            <person name="Chapman J.C."/>
            <person name="Clark S.Y."/>
            <person name="Clarke G."/>
            <person name="Clee C."/>
            <person name="Cobley V."/>
            <person name="Collier R.E."/>
            <person name="Corby N."/>
            <person name="Coville G.J."/>
            <person name="Davies J."/>
            <person name="Deadman R."/>
            <person name="Dunn M."/>
            <person name="Earthrowl M."/>
            <person name="Ellington A.G."/>
            <person name="Errington H."/>
            <person name="Frankish A."/>
            <person name="Frankland J."/>
            <person name="French L."/>
            <person name="Garner P."/>
            <person name="Garnett J."/>
            <person name="Gay L."/>
            <person name="Ghori M.R.J."/>
            <person name="Gibson R."/>
            <person name="Gilby L.M."/>
            <person name="Gillett W."/>
            <person name="Glithero R.J."/>
            <person name="Grafham D.V."/>
            <person name="Griffiths C."/>
            <person name="Griffiths-Jones S."/>
            <person name="Grocock R."/>
            <person name="Hammond S."/>
            <person name="Harrison E.S.I."/>
            <person name="Hart E."/>
            <person name="Haugen E."/>
            <person name="Heath P.D."/>
            <person name="Holmes S."/>
            <person name="Holt K."/>
            <person name="Howden P.J."/>
            <person name="Hunt A.R."/>
            <person name="Hunt S.E."/>
            <person name="Hunter G."/>
            <person name="Isherwood J."/>
            <person name="James R."/>
            <person name="Johnson C."/>
            <person name="Johnson D."/>
            <person name="Joy A."/>
            <person name="Kay M."/>
            <person name="Kershaw J.K."/>
            <person name="Kibukawa M."/>
            <person name="Kimberley A.M."/>
            <person name="King A."/>
            <person name="Knights A.J."/>
            <person name="Lad H."/>
            <person name="Laird G."/>
            <person name="Lawlor S."/>
            <person name="Leongamornlert D.A."/>
            <person name="Lloyd D.M."/>
            <person name="Loveland J."/>
            <person name="Lovell J."/>
            <person name="Lush M.J."/>
            <person name="Lyne R."/>
            <person name="Martin S."/>
            <person name="Mashreghi-Mohammadi M."/>
            <person name="Matthews L."/>
            <person name="Matthews N.S.W."/>
            <person name="McLaren S."/>
            <person name="Milne S."/>
            <person name="Mistry S."/>
            <person name="Moore M.J.F."/>
            <person name="Nickerson T."/>
            <person name="O'Dell C.N."/>
            <person name="Oliver K."/>
            <person name="Palmeiri A."/>
            <person name="Palmer S.A."/>
            <person name="Parker A."/>
            <person name="Patel D."/>
            <person name="Pearce A.V."/>
            <person name="Peck A.I."/>
            <person name="Pelan S."/>
            <person name="Phelps K."/>
            <person name="Phillimore B.J."/>
            <person name="Plumb R."/>
            <person name="Rajan J."/>
            <person name="Raymond C."/>
            <person name="Rouse G."/>
            <person name="Saenphimmachak C."/>
            <person name="Sehra H.K."/>
            <person name="Sheridan E."/>
            <person name="Shownkeen R."/>
            <person name="Sims S."/>
            <person name="Skuce C.D."/>
            <person name="Smith M."/>
            <person name="Steward C."/>
            <person name="Subramanian S."/>
            <person name="Sycamore N."/>
            <person name="Tracey A."/>
            <person name="Tromans A."/>
            <person name="Van Helmond Z."/>
            <person name="Wall M."/>
            <person name="Wallis J.M."/>
            <person name="White S."/>
            <person name="Whitehead S.L."/>
            <person name="Wilkinson J.E."/>
            <person name="Willey D.L."/>
            <person name="Williams H."/>
            <person name="Wilming L."/>
            <person name="Wray P.W."/>
            <person name="Wu Z."/>
            <person name="Coulson A."/>
            <person name="Vaudin M."/>
            <person name="Sulston J.E."/>
            <person name="Durbin R.M."/>
            <person name="Hubbard T."/>
            <person name="Wooster R."/>
            <person name="Dunham I."/>
            <person name="Carter N.P."/>
            <person name="McVean G."/>
            <person name="Ross M.T."/>
            <person name="Harrow J."/>
            <person name="Olson M.V."/>
            <person name="Beck S."/>
            <person name="Rogers J."/>
            <person name="Bentley D.R."/>
        </authorList>
    </citation>
    <scope>NUCLEOTIDE SEQUENCE [LARGE SCALE GENOMIC DNA]</scope>
</reference>
<reference key="3">
    <citation type="submission" date="1999-07" db="EMBL/GenBank/DDBJ databases">
        <authorList>
            <person name="Rhodes S."/>
            <person name="Huckle E."/>
        </authorList>
    </citation>
    <scope>NUCLEOTIDE SEQUENCE [LARGE SCALE MRNA] OF 294-3664</scope>
</reference>
<reference key="4">
    <citation type="journal article" date="2004" name="Nat. Genet.">
        <title>Complete sequencing and characterization of 21,243 full-length human cDNAs.</title>
        <authorList>
            <person name="Ota T."/>
            <person name="Suzuki Y."/>
            <person name="Nishikawa T."/>
            <person name="Otsuki T."/>
            <person name="Sugiyama T."/>
            <person name="Irie R."/>
            <person name="Wakamatsu A."/>
            <person name="Hayashi K."/>
            <person name="Sato H."/>
            <person name="Nagai K."/>
            <person name="Kimura K."/>
            <person name="Makita H."/>
            <person name="Sekine M."/>
            <person name="Obayashi M."/>
            <person name="Nishi T."/>
            <person name="Shibahara T."/>
            <person name="Tanaka T."/>
            <person name="Ishii S."/>
            <person name="Yamamoto J."/>
            <person name="Saito K."/>
            <person name="Kawai Y."/>
            <person name="Isono Y."/>
            <person name="Nakamura Y."/>
            <person name="Nagahari K."/>
            <person name="Murakami K."/>
            <person name="Yasuda T."/>
            <person name="Iwayanagi T."/>
            <person name="Wagatsuma M."/>
            <person name="Shiratori A."/>
            <person name="Sudo H."/>
            <person name="Hosoiri T."/>
            <person name="Kaku Y."/>
            <person name="Kodaira H."/>
            <person name="Kondo H."/>
            <person name="Sugawara M."/>
            <person name="Takahashi M."/>
            <person name="Kanda K."/>
            <person name="Yokoi T."/>
            <person name="Furuya T."/>
            <person name="Kikkawa E."/>
            <person name="Omura Y."/>
            <person name="Abe K."/>
            <person name="Kamihara K."/>
            <person name="Katsuta N."/>
            <person name="Sato K."/>
            <person name="Tanikawa M."/>
            <person name="Yamazaki M."/>
            <person name="Ninomiya K."/>
            <person name="Ishibashi T."/>
            <person name="Yamashita H."/>
            <person name="Murakawa K."/>
            <person name="Fujimori K."/>
            <person name="Tanai H."/>
            <person name="Kimata M."/>
            <person name="Watanabe M."/>
            <person name="Hiraoka S."/>
            <person name="Chiba Y."/>
            <person name="Ishida S."/>
            <person name="Ono Y."/>
            <person name="Takiguchi S."/>
            <person name="Watanabe S."/>
            <person name="Yosida M."/>
            <person name="Hotuta T."/>
            <person name="Kusano J."/>
            <person name="Kanehori K."/>
            <person name="Takahashi-Fujii A."/>
            <person name="Hara H."/>
            <person name="Tanase T.-O."/>
            <person name="Nomura Y."/>
            <person name="Togiya S."/>
            <person name="Komai F."/>
            <person name="Hara R."/>
            <person name="Takeuchi K."/>
            <person name="Arita M."/>
            <person name="Imose N."/>
            <person name="Musashino K."/>
            <person name="Yuuki H."/>
            <person name="Oshima A."/>
            <person name="Sasaki N."/>
            <person name="Aotsuka S."/>
            <person name="Yoshikawa Y."/>
            <person name="Matsunawa H."/>
            <person name="Ichihara T."/>
            <person name="Shiohata N."/>
            <person name="Sano S."/>
            <person name="Moriya S."/>
            <person name="Momiyama H."/>
            <person name="Satoh N."/>
            <person name="Takami S."/>
            <person name="Terashima Y."/>
            <person name="Suzuki O."/>
            <person name="Nakagawa S."/>
            <person name="Senoh A."/>
            <person name="Mizoguchi H."/>
            <person name="Goto Y."/>
            <person name="Shimizu F."/>
            <person name="Wakebe H."/>
            <person name="Hishigaki H."/>
            <person name="Watanabe T."/>
            <person name="Sugiyama A."/>
            <person name="Takemoto M."/>
            <person name="Kawakami B."/>
            <person name="Yamazaki M."/>
            <person name="Watanabe K."/>
            <person name="Kumagai A."/>
            <person name="Itakura S."/>
            <person name="Fukuzumi Y."/>
            <person name="Fujimori Y."/>
            <person name="Komiyama M."/>
            <person name="Tashiro H."/>
            <person name="Tanigami A."/>
            <person name="Fujiwara T."/>
            <person name="Ono T."/>
            <person name="Yamada K."/>
            <person name="Fujii Y."/>
            <person name="Ozaki K."/>
            <person name="Hirao M."/>
            <person name="Ohmori Y."/>
            <person name="Kawabata A."/>
            <person name="Hikiji T."/>
            <person name="Kobatake N."/>
            <person name="Inagaki H."/>
            <person name="Ikema Y."/>
            <person name="Okamoto S."/>
            <person name="Okitani R."/>
            <person name="Kawakami T."/>
            <person name="Noguchi S."/>
            <person name="Itoh T."/>
            <person name="Shigeta K."/>
            <person name="Senba T."/>
            <person name="Matsumura K."/>
            <person name="Nakajima Y."/>
            <person name="Mizuno T."/>
            <person name="Morinaga M."/>
            <person name="Sasaki M."/>
            <person name="Togashi T."/>
            <person name="Oyama M."/>
            <person name="Hata H."/>
            <person name="Watanabe M."/>
            <person name="Komatsu T."/>
            <person name="Mizushima-Sugano J."/>
            <person name="Satoh T."/>
            <person name="Shirai Y."/>
            <person name="Takahashi Y."/>
            <person name="Nakagawa K."/>
            <person name="Okumura K."/>
            <person name="Nagase T."/>
            <person name="Nomura N."/>
            <person name="Kikuchi H."/>
            <person name="Masuho Y."/>
            <person name="Yamashita R."/>
            <person name="Nakai K."/>
            <person name="Yada T."/>
            <person name="Nakamura Y."/>
            <person name="Ohara O."/>
            <person name="Isogai T."/>
            <person name="Sugano S."/>
        </authorList>
    </citation>
    <scope>NUCLEOTIDE SEQUENCE [LARGE SCALE MRNA] OF 793-1595</scope>
    <scope>VARIANT PRO-1091</scope>
    <source>
        <tissue>Embryo</tissue>
        <tissue>Teratocarcinoma</tissue>
    </source>
</reference>
<reference key="5">
    <citation type="journal article" date="1999" name="DNA Res.">
        <title>Prediction of the coding sequences of unidentified human genes. XIII. The complete sequences of 100 new cDNA clones from brain which code for large proteins in vitro.</title>
        <authorList>
            <person name="Nagase T."/>
            <person name="Ishikawa K."/>
            <person name="Suyama M."/>
            <person name="Kikuno R."/>
            <person name="Hirosawa M."/>
            <person name="Miyajima N."/>
            <person name="Tanaka A."/>
            <person name="Kotani H."/>
            <person name="Nomura N."/>
            <person name="Ohara O."/>
        </authorList>
    </citation>
    <scope>NUCLEOTIDE SEQUENCE [LARGE SCALE MRNA] OF 2002-3664</scope>
    <source>
        <tissue>Brain</tissue>
    </source>
</reference>
<reference key="6">
    <citation type="journal article" date="2002" name="Proc. Natl. Acad. Sci. U.S.A.">
        <title>The peroxisome proliferator-activated receptor delta, an integrator of transcriptional repression and nuclear receptor signaling.</title>
        <authorList>
            <person name="Shi Y."/>
            <person name="Hon M."/>
            <person name="Evans R.M."/>
        </authorList>
    </citation>
    <scope>INTERACTION WITH PPARD</scope>
</reference>
<reference key="7">
    <citation type="journal article" date="2002" name="EMBO J.">
        <title>SHARP is a novel component of the Notch/RBP-Jkappa signalling pathway.</title>
        <authorList>
            <person name="Oswald F."/>
            <person name="Kostezka U."/>
            <person name="Astrahantseff K."/>
            <person name="Bourteele S."/>
            <person name="Dillinger K."/>
            <person name="Zechner U."/>
            <person name="Ludwig L."/>
            <person name="Wilda M."/>
            <person name="Hameister H."/>
            <person name="Knoechel W."/>
            <person name="Liptay S."/>
            <person name="Schmid R.M."/>
        </authorList>
    </citation>
    <scope>FUNCTION</scope>
    <scope>INTERACTION WITH RBPSUH</scope>
</reference>
<reference key="8">
    <citation type="journal article" date="2005" name="J. Biol. Chem.">
        <title>Interaction of the Epstein-Barr virus mRNA export factor EB2 with human Spen proteins SHARP, OTT1, and a novel member of the family, OTT3, links Spen proteins with splicing regulation and mRNA export.</title>
        <authorList>
            <person name="Hiriart E."/>
            <person name="Gruffat H."/>
            <person name="Buisson M."/>
            <person name="Mikaelian I."/>
            <person name="Keppler S."/>
            <person name="Meresse P."/>
            <person name="Mercher T."/>
            <person name="Bernard O.A."/>
            <person name="Sergeant A."/>
            <person name="Manet E."/>
        </authorList>
    </citation>
    <scope>INTERACTION WITH EBV BSFL2/BMLF1 (MICROBIAL INFECTION)</scope>
</reference>
<reference key="9">
    <citation type="journal article" date="2006" name="Cell">
        <title>Global, in vivo, and site-specific phosphorylation dynamics in signaling networks.</title>
        <authorList>
            <person name="Olsen J.V."/>
            <person name="Blagoev B."/>
            <person name="Gnad F."/>
            <person name="Macek B."/>
            <person name="Kumar C."/>
            <person name="Mortensen P."/>
            <person name="Mann M."/>
        </authorList>
    </citation>
    <scope>PHOSPHORYLATION [LARGE SCALE ANALYSIS] AT SER-1268; SER-1278; SER-1283; SER-1380 AND SER-1382</scope>
    <scope>IDENTIFICATION BY MASS SPECTROMETRY [LARGE SCALE ANALYSIS]</scope>
    <source>
        <tissue>Cervix carcinoma</tissue>
    </source>
</reference>
<reference key="10">
    <citation type="journal article" date="2007" name="Science">
        <title>ATM and ATR substrate analysis reveals extensive protein networks responsive to DNA damage.</title>
        <authorList>
            <person name="Matsuoka S."/>
            <person name="Ballif B.A."/>
            <person name="Smogorzewska A."/>
            <person name="McDonald E.R. III"/>
            <person name="Hurov K.E."/>
            <person name="Luo J."/>
            <person name="Bakalarski C.E."/>
            <person name="Zhao Z."/>
            <person name="Solimini N."/>
            <person name="Lerenthal Y."/>
            <person name="Shiloh Y."/>
            <person name="Gygi S.P."/>
            <person name="Elledge S.J."/>
        </authorList>
    </citation>
    <scope>IDENTIFICATION BY MASS SPECTROMETRY [LARGE SCALE ANALYSIS]</scope>
    <source>
        <tissue>Embryonic kidney</tissue>
    </source>
</reference>
<reference key="11">
    <citation type="journal article" date="2008" name="Proc. Natl. Acad. Sci. U.S.A.">
        <title>A quantitative atlas of mitotic phosphorylation.</title>
        <authorList>
            <person name="Dephoure N."/>
            <person name="Zhou C."/>
            <person name="Villen J."/>
            <person name="Beausoleil S.A."/>
            <person name="Bakalarski C.E."/>
            <person name="Elledge S.J."/>
            <person name="Gygi S.P."/>
        </authorList>
    </citation>
    <scope>PHOSPHORYLATION [LARGE SCALE ANALYSIS] AT SER-736; SER-740; SER-1194; SER-1287; SER-1380; SER-1382; THR-1439; THR-1441; SER-1897; SER-2120; SER-2126; SER-2366; THR-2421; THR-2938; THR-2950 AND SER-3433</scope>
    <scope>IDENTIFICATION BY MASS SPECTROMETRY [LARGE SCALE ANALYSIS]</scope>
    <source>
        <tissue>Cervix carcinoma</tissue>
    </source>
</reference>
<reference key="12">
    <citation type="journal article" date="2009" name="Anal. Chem.">
        <title>Lys-N and trypsin cover complementary parts of the phosphoproteome in a refined SCX-based approach.</title>
        <authorList>
            <person name="Gauci S."/>
            <person name="Helbig A.O."/>
            <person name="Slijper M."/>
            <person name="Krijgsveld J."/>
            <person name="Heck A.J."/>
            <person name="Mohammed S."/>
        </authorList>
    </citation>
    <scope>IDENTIFICATION BY MASS SPECTROMETRY [LARGE SCALE ANALYSIS]</scope>
</reference>
<reference key="13">
    <citation type="journal article" date="2009" name="Sci. Signal.">
        <title>Quantitative phosphoproteomic analysis of T cell receptor signaling reveals system-wide modulation of protein-protein interactions.</title>
        <authorList>
            <person name="Mayya V."/>
            <person name="Lundgren D.H."/>
            <person name="Hwang S.-I."/>
            <person name="Rezaul K."/>
            <person name="Wu L."/>
            <person name="Eng J.K."/>
            <person name="Rodionov V."/>
            <person name="Han D.K."/>
        </authorList>
    </citation>
    <scope>PHOSPHORYLATION [LARGE SCALE ANALYSIS] AT SER-1222; SER-1268; SER-1278; THR-1947; SER-2452 AND THR-2460</scope>
    <scope>IDENTIFICATION BY MASS SPECTROMETRY [LARGE SCALE ANALYSIS]</scope>
    <source>
        <tissue>Leukemic T-cell</tissue>
    </source>
</reference>
<reference key="14">
    <citation type="journal article" date="2010" name="Sci. Signal.">
        <title>Quantitative phosphoproteomics reveals widespread full phosphorylation site occupancy during mitosis.</title>
        <authorList>
            <person name="Olsen J.V."/>
            <person name="Vermeulen M."/>
            <person name="Santamaria A."/>
            <person name="Kumar C."/>
            <person name="Miller M.L."/>
            <person name="Jensen L.J."/>
            <person name="Gnad F."/>
            <person name="Cox J."/>
            <person name="Jensen T.S."/>
            <person name="Nigg E.A."/>
            <person name="Brunak S."/>
            <person name="Mann M."/>
        </authorList>
    </citation>
    <scope>PHOSPHORYLATION [LARGE SCALE ANALYSIS] AT SER-309; SER-623; SER-727; SER-1252; SER-1268; SER-1278; SER-1287; SER-1333; THR-1633; SER-1897; SER-2101; SER-2120 AND SER-2159</scope>
    <scope>IDENTIFICATION BY MASS SPECTROMETRY [LARGE SCALE ANALYSIS]</scope>
    <source>
        <tissue>Cervix carcinoma</tissue>
    </source>
</reference>
<reference key="15">
    <citation type="journal article" date="2011" name="Sci. Signal.">
        <title>System-wide temporal characterization of the proteome and phosphoproteome of human embryonic stem cell differentiation.</title>
        <authorList>
            <person name="Rigbolt K.T."/>
            <person name="Prokhorova T.A."/>
            <person name="Akimov V."/>
            <person name="Henningsen J."/>
            <person name="Johansen P.T."/>
            <person name="Kratchmarova I."/>
            <person name="Kassem M."/>
            <person name="Mann M."/>
            <person name="Olsen J.V."/>
            <person name="Blagoev B."/>
        </authorList>
    </citation>
    <scope>PHOSPHORYLATION [LARGE SCALE ANALYSIS] AT SER-727; SER-1062; SER-1222; SER-1261; SER-1268; SER-1278; SER-1380; SER-1382; SER-2101 AND SER-2120</scope>
    <scope>IDENTIFICATION BY MASS SPECTROMETRY [LARGE SCALE ANALYSIS]</scope>
</reference>
<reference key="16">
    <citation type="journal article" date="2013" name="J. Proteome Res.">
        <title>Toward a comprehensive characterization of a human cancer cell phosphoproteome.</title>
        <authorList>
            <person name="Zhou H."/>
            <person name="Di Palma S."/>
            <person name="Preisinger C."/>
            <person name="Peng M."/>
            <person name="Polat A.N."/>
            <person name="Heck A.J."/>
            <person name="Mohammed S."/>
        </authorList>
    </citation>
    <scope>PHOSPHORYLATION [LARGE SCALE ANALYSIS] AT SER-99; SER-188; SER-190; SER-725; SER-727; SER-736; SER-740; SER-770; SER-847; SER-1062; THR-1140; SER-1168; SER-1194; SER-1222; SER-1268; SER-1278; SER-1283; SER-1287; SER-1333; SER-1380; SER-1382; THR-1619; THR-1633; THR-1826; SER-1918; SER-2101; SER-2126; SER-2159; THR-2163; THR-2393; THR-2421; SER-2481 AND SER-2493</scope>
    <scope>IDENTIFICATION BY MASS SPECTROMETRY [LARGE SCALE ANALYSIS]</scope>
    <source>
        <tissue>Cervix carcinoma</tissue>
        <tissue>Erythroleukemia</tissue>
    </source>
</reference>
<reference key="17">
    <citation type="journal article" date="2014" name="J. Proteomics">
        <title>An enzyme assisted RP-RPLC approach for in-depth analysis of human liver phosphoproteome.</title>
        <authorList>
            <person name="Bian Y."/>
            <person name="Song C."/>
            <person name="Cheng K."/>
            <person name="Dong M."/>
            <person name="Wang F."/>
            <person name="Huang J."/>
            <person name="Sun D."/>
            <person name="Wang L."/>
            <person name="Ye M."/>
            <person name="Zou H."/>
        </authorList>
    </citation>
    <scope>PHOSPHORYLATION [LARGE SCALE ANALYSIS] AT SER-1062; SER-1268; SER-1278; THR-2393; SER-2456; SER-2481 AND SER-2486</scope>
    <scope>IDENTIFICATION BY MASS SPECTROMETRY [LARGE SCALE ANALYSIS]</scope>
    <source>
        <tissue>Liver</tissue>
    </source>
</reference>
<reference key="18">
    <citation type="journal article" date="2014" name="Mol. Cell. Proteomics">
        <title>Immunoaffinity enrichment and mass spectrometry analysis of protein methylation.</title>
        <authorList>
            <person name="Guo A."/>
            <person name="Gu H."/>
            <person name="Zhou J."/>
            <person name="Mulhern D."/>
            <person name="Wang Y."/>
            <person name="Lee K.A."/>
            <person name="Yang V."/>
            <person name="Aguiar M."/>
            <person name="Kornhauser J."/>
            <person name="Jia X."/>
            <person name="Ren J."/>
            <person name="Beausoleil S.A."/>
            <person name="Silva J.C."/>
            <person name="Vemulapalli V."/>
            <person name="Bedford M.T."/>
            <person name="Comb M.J."/>
        </authorList>
    </citation>
    <scope>METHYLATION [LARGE SCALE ANALYSIS] AT ARG-108; ARG-3113 AND ARG-3121</scope>
    <scope>IDENTIFICATION BY MASS SPECTROMETRY [LARGE SCALE ANALYSIS]</scope>
    <source>
        <tissue>Colon carcinoma</tissue>
    </source>
</reference>
<reference key="19">
    <citation type="journal article" date="2021" name="Am. J. Hum. Genet.">
        <title>SPEN haploinsufficiency causes a neurodevelopmental disorder overlapping proximal 1p36 deletion syndrome with an episignature of X chromosomes in females.</title>
        <authorList>
            <person name="Radio F.C."/>
            <person name="Pang K."/>
            <person name="Ciolfi A."/>
            <person name="Levy M.A."/>
            <person name="Hernandez-Garcia A."/>
            <person name="Pedace L."/>
            <person name="Pantaleoni F."/>
            <person name="Liu Z."/>
            <person name="de Boer E."/>
            <person name="Jackson A."/>
            <person name="Bruselles A."/>
            <person name="McConkey H."/>
            <person name="Stellacci E."/>
            <person name="Lo Cicero S."/>
            <person name="Motta M."/>
            <person name="Carrozzo R."/>
            <person name="Dentici M.L."/>
            <person name="McWalter K."/>
            <person name="Desai M."/>
            <person name="Monaghan K.G."/>
            <person name="Telegrafi A."/>
            <person name="Philippe C."/>
            <person name="Vitobello A."/>
            <person name="Au M."/>
            <person name="Grand K."/>
            <person name="Sanchez-Lara P.A."/>
            <person name="Baez J."/>
            <person name="Lindstrom K."/>
            <person name="Kulch P."/>
            <person name="Sebastian J."/>
            <person name="Madan-Khetarpal S."/>
            <person name="Roadhouse C."/>
            <person name="MacKenzie J.J."/>
            <person name="Monteleone B."/>
            <person name="Saunders C.J."/>
            <person name="Jean Cuevas J.K."/>
            <person name="Cross L."/>
            <person name="Zhou D."/>
            <person name="Hartley T."/>
            <person name="Sawyer S.L."/>
            <person name="Monteiro F.P."/>
            <person name="Secches T.V."/>
            <person name="Kok F."/>
            <person name="Schultz-Rogers L.E."/>
            <person name="Macke E.L."/>
            <person name="Morava E."/>
            <person name="Klee E.W."/>
            <person name="Kemppainen J."/>
            <person name="Iascone M."/>
            <person name="Selicorni A."/>
            <person name="Tenconi R."/>
            <person name="Amor D.J."/>
            <person name="Pais L."/>
            <person name="Gallacher L."/>
            <person name="Turnpenny P.D."/>
            <person name="Stals K."/>
            <person name="Ellard S."/>
            <person name="Cabet S."/>
            <person name="Lesca G."/>
            <person name="Pascal J."/>
            <person name="Steindl K."/>
            <person name="Ravid S."/>
            <person name="Weiss K."/>
            <person name="Castle A.M.R."/>
            <person name="Carter M.T."/>
            <person name="Kalsner L."/>
            <person name="de Vries B.B.A."/>
            <person name="van Bon B.W."/>
            <person name="Wevers M.R."/>
            <person name="Pfundt R."/>
            <person name="Stegmann A.P.A."/>
            <person name="Kerr B."/>
            <person name="Kingston H.M."/>
            <person name="Chandler K.E."/>
            <person name="Sheehan W."/>
            <person name="Elias A.F."/>
            <person name="Shinde D.N."/>
            <person name="Towne M.C."/>
            <person name="Robin N.H."/>
            <person name="Goodloe D."/>
            <person name="Vanderver A."/>
            <person name="Sherbini O."/>
            <person name="Bluske K."/>
            <person name="Hagelstrom R.T."/>
            <person name="Zanus C."/>
            <person name="Faletra F."/>
            <person name="Musante L."/>
            <person name="Kurtz-Nelson E.C."/>
            <person name="Earl R.K."/>
            <person name="Anderlid B.M."/>
            <person name="Morin G."/>
            <person name="van Slegtenhorst M."/>
            <person name="Diderich K.E.M."/>
            <person name="Brooks A.S."/>
            <person name="Gribnau J."/>
            <person name="Boers R.G."/>
            <person name="Finestra T.R."/>
            <person name="Carter L.B."/>
            <person name="Rauch A."/>
            <person name="Gasparini P."/>
            <person name="Boycott K.M."/>
            <person name="Barakat T.S."/>
            <person name="Graham J.M. Jr."/>
            <person name="Faivre L."/>
            <person name="Banka S."/>
            <person name="Wang T."/>
            <person name="Eichler E.E."/>
            <person name="Priolo M."/>
            <person name="Dallapiccola B."/>
            <person name="Vissers L.E.L.M."/>
            <person name="Sadikovic B."/>
            <person name="Scott D.A."/>
            <person name="Holder J.L. Jr."/>
            <person name="Tartaglia M."/>
        </authorList>
    </citation>
    <scope>INVOLVEMENT IN RATARS</scope>
    <scope>VARIANTS RATARS 535-ARG--VAL-3664 DEL; 672-ARG--VAL-3664 DEL; 701-GLU--VAL-3664 DEL; 1067-GLN--VAL-3664 DEL; 1170-ARG--VAL-3664 DEL; 1265-ARG--VAL-3664 DEL; 1798-GLN--VAL-3664 DEL; 1936-ARG--VAL-3664 DEL; 2020-GLN--VAL-3664 DEL; 2267-GLU--VAL-3664 DEL; 2342-ARG--VAL-3664 DEL AND 2442-GLU--VAL-3664 DEL</scope>
</reference>
<reference key="20">
    <citation type="journal article" date="2003" name="Genes Dev.">
        <title>A conserved structural motif reveals the essential transcriptional repression function of Spen proteins and their role in developmental signaling.</title>
        <authorList>
            <person name="Ariyoshi M."/>
            <person name="Schwabe J.W.R."/>
        </authorList>
    </citation>
    <scope>X-RAY CRYSTALLOGRAPHY (1.8 ANGSTROMS) OF SPOC DOMAIN</scope>
</reference>
<reference key="21">
    <citation type="journal article" date="2006" name="Science">
        <title>The consensus coding sequences of human breast and colorectal cancers.</title>
        <authorList>
            <person name="Sjoeblom T."/>
            <person name="Jones S."/>
            <person name="Wood L.D."/>
            <person name="Parsons D.W."/>
            <person name="Lin J."/>
            <person name="Barber T.D."/>
            <person name="Mandelker D."/>
            <person name="Leary R.J."/>
            <person name="Ptak J."/>
            <person name="Silliman N."/>
            <person name="Szabo S."/>
            <person name="Buckhaults P."/>
            <person name="Farrell C."/>
            <person name="Meeh P."/>
            <person name="Markowitz S.D."/>
            <person name="Willis J."/>
            <person name="Dawson D."/>
            <person name="Willson J.K.V."/>
            <person name="Gazdar A.F."/>
            <person name="Hartigan J."/>
            <person name="Wu L."/>
            <person name="Liu C."/>
            <person name="Parmigiani G."/>
            <person name="Park B.H."/>
            <person name="Bachman K.E."/>
            <person name="Papadopoulos N."/>
            <person name="Vogelstein B."/>
            <person name="Kinzler K.W."/>
            <person name="Velculescu V.E."/>
        </authorList>
    </citation>
    <scope>VARIANTS [LARGE SCALE ANALYSIS] HIS-990 AND ILE-1488</scope>
</reference>
<accession>Q96T58</accession>
<accession>Q9H9A8</accession>
<accession>Q9NWH5</accession>
<accession>Q9UQ01</accession>
<accession>Q9Y556</accession>
<comment type="function">
    <text evidence="2 7 9">May serve as a nuclear matrix platform that organizes and integrates transcriptional responses. In osteoblasts, supports transcription activation: synergizes with RUNX2 to enhance FGFR2-mediated activation of the osteocalcin FGF-responsive element (OCFRE) (By similarity). Has also been shown to be an essential corepressor protein, which probably regulates different key pathways such as the Notch pathway. Negative regulator of the Notch pathway via its interaction with RBPSUH, which prevents the association between NOTCH1 and RBPSUH, and therefore suppresses the transactivation activity of Notch signaling. Blocks the differentiation of precursor B-cells into marginal zone B-cells. Probably represses transcription via the recruitment of large complexes containing histone deacetylase proteins. May bind both to DNA and RNA.</text>
</comment>
<comment type="subunit">
    <text evidence="1 7 8 9">Interacts with MSX2 and HIPK3 (By similarity). Interacts with NCOR2, HDAC1, HDAC2, RBBP4, MBD3 and MTA1L1. Interacts with RBPSUH; this interaction may prevent the interaction between RBPSUH and NOTCH1. Interacts with the nuclear receptors RAR and PPARD. Interacts with RAR in absence of ligand. Binds to the steroid receptor RNA coactivator SRA.</text>
</comment>
<comment type="subunit">
    <text evidence="11">(Microbial infection) Interacts with Epstein-Barr virus BSFL2/BMLF1.</text>
</comment>
<comment type="interaction">
    <interactant intactId="EBI-765739">
        <id>Q96T58</id>
    </interactant>
    <interactant intactId="EBI-886">
        <id>P46108</id>
        <label>CRK</label>
    </interactant>
    <organismsDiffer>false</organismsDiffer>
    <experiments>2</experiments>
</comment>
<comment type="interaction">
    <interactant intactId="EBI-765739">
        <id>Q96T58</id>
    </interactant>
    <interactant intactId="EBI-389883">
        <id>P16333</id>
        <label>NCK1</label>
    </interactant>
    <organismsDiffer>false</organismsDiffer>
    <experiments>3</experiments>
</comment>
<comment type="interaction">
    <interactant intactId="EBI-765739">
        <id>Q96T58</id>
    </interactant>
    <interactant intactId="EBI-80830">
        <id>Q9Y618</id>
        <label>NCOR2</label>
    </interactant>
    <organismsDiffer>false</organismsDiffer>
    <experiments>5</experiments>
</comment>
<comment type="interaction">
    <interactant intactId="EBI-765739">
        <id>Q96T58</id>
    </interactant>
    <interactant intactId="EBI-632552">
        <id>Q06330</id>
        <label>RBPJ</label>
    </interactant>
    <organismsDiffer>false</organismsDiffer>
    <experiments>3</experiments>
</comment>
<comment type="subcellular location">
    <subcellularLocation>
        <location evidence="7">Nucleus</location>
    </subcellularLocation>
    <text>Associates with chromatin.</text>
</comment>
<comment type="tissue specificity">
    <text>Expressed at high level in brain, testis, spleen and thymus. Expressed at intermediate level in kidney, liver, mammary gland and skin.</text>
</comment>
<comment type="induction">
    <text evidence="7">By 17-beta-estradiol.</text>
</comment>
<comment type="domain">
    <text evidence="1">The RID domain mediates the interaction with nuclear receptors.</text>
</comment>
<comment type="domain">
    <text>The SPOC domain, which mediates the interaction with NCOR2, is essential for the repressive activity.</text>
</comment>
<comment type="disease" evidence="13">
    <disease id="DI-06099">
        <name>Radio-Tartaglia syndrome</name>
        <acronym>RATARS</acronym>
        <description>An autosomal dominant neurodevelopmental disorder characterized by global developmental delay, hypotonia, mild motor difficulties, impaired intellectual development, speech delay, craniofacial dysmorphism, and variable behavioral abnormalities.</description>
        <dbReference type="MIM" id="619312"/>
    </disease>
    <text>The disease is caused by variants affecting the gene represented in this entry.</text>
</comment>
<comment type="similarity">
    <text evidence="14">Belongs to the RRM Spen family.</text>
</comment>
<comment type="sequence caution" evidence="14">
    <conflict type="erroneous initiation">
        <sequence resource="EMBL-CDS" id="BAA91405"/>
    </conflict>
    <text>Truncated N-terminus.</text>
</comment>
<comment type="sequence caution" evidence="14">
    <conflict type="erroneous initiation">
        <sequence resource="EMBL-CDS" id="BAB14324"/>
    </conflict>
    <text>Truncated N-terminus.</text>
</comment>
<comment type="sequence caution" evidence="14">
    <conflict type="erroneous initiation">
        <sequence resource="EMBL-CDS" id="CAB51072"/>
    </conflict>
    <text>Truncated N-terminus.</text>
</comment>
<proteinExistence type="evidence at protein level"/>